<organism>
    <name type="scientific">Streptomyces coelicolor (strain ATCC BAA-471 / A3(2) / M145)</name>
    <dbReference type="NCBI Taxonomy" id="100226"/>
    <lineage>
        <taxon>Bacteria</taxon>
        <taxon>Bacillati</taxon>
        <taxon>Actinomycetota</taxon>
        <taxon>Actinomycetes</taxon>
        <taxon>Kitasatosporales</taxon>
        <taxon>Streptomycetaceae</taxon>
        <taxon>Streptomyces</taxon>
        <taxon>Streptomyces albidoflavus group</taxon>
    </lineage>
</organism>
<name>RPOA_STRCO</name>
<sequence length="340" mass="36696">MLIAQRPSLTEEVVDEFRSRFVIEPLEPGFGYTLGNSLRRTLLSSIPGAAVTSIRIDGVLHEFTTVPGVKEDVTDLILNIKQLVVSSEHDEPVVMYLRKQGPGLVTAADIAPPAGVEVHNPDLVLATLNGKGKLEMELTVERGRGYVSAVQNKQVGQEIGRIPVDSIYSPVLKVTYKVEATRVEQRTDFDKLIVDVETKQAMRPRDAMASAGKTLVELFGLARELNIDAEGIDMGPSPTDAALAADLALPIEELELTVRSYNCLKREGIHSVGELVARSEADLLDIRNFGAKSIDEVKAKLAGMGLALKDSPPGFDPTAAADAFGADDDADAGFVETEQY</sequence>
<keyword id="KW-0002">3D-structure</keyword>
<keyword id="KW-0963">Cytoplasm</keyword>
<keyword id="KW-0240">DNA-directed RNA polymerase</keyword>
<keyword id="KW-0548">Nucleotidyltransferase</keyword>
<keyword id="KW-1185">Reference proteome</keyword>
<keyword id="KW-0804">Transcription</keyword>
<keyword id="KW-0808">Transferase</keyword>
<gene>
    <name evidence="1" type="primary">rpoA</name>
    <name type="ordered locus">SCO4729</name>
    <name type="ORF">SC6G4.07</name>
</gene>
<evidence type="ECO:0000255" key="1">
    <source>
        <dbReference type="HAMAP-Rule" id="MF_00059"/>
    </source>
</evidence>
<evidence type="ECO:0000305" key="2"/>
<evidence type="ECO:0000305" key="3">
    <source>
    </source>
</evidence>
<evidence type="ECO:0007829" key="4">
    <source>
        <dbReference type="PDB" id="8HVR"/>
    </source>
</evidence>
<evidence type="ECO:0007829" key="5">
    <source>
        <dbReference type="PDB" id="8K60"/>
    </source>
</evidence>
<accession>P60312</accession>
<accession>O86774</accession>
<accession>P72404</accession>
<dbReference type="EC" id="2.7.7.6" evidence="1"/>
<dbReference type="EMBL" id="X92107">
    <property type="protein sequence ID" value="CAA63080.1"/>
    <property type="molecule type" value="Genomic_DNA"/>
</dbReference>
<dbReference type="EMBL" id="AL939121">
    <property type="protein sequence ID" value="CAA20385.1"/>
    <property type="molecule type" value="Genomic_DNA"/>
</dbReference>
<dbReference type="PIR" id="T35558">
    <property type="entry name" value="T35558"/>
</dbReference>
<dbReference type="RefSeq" id="NP_628887.1">
    <property type="nucleotide sequence ID" value="NC_003888.3"/>
</dbReference>
<dbReference type="RefSeq" id="WP_003966937.1">
    <property type="nucleotide sequence ID" value="NZ_VNID01000016.1"/>
</dbReference>
<dbReference type="PDB" id="8HVR">
    <property type="method" value="EM"/>
    <property type="resolution" value="3.35 A"/>
    <property type="chains" value="A/B/K=1-340"/>
</dbReference>
<dbReference type="PDB" id="8JKE">
    <property type="method" value="EM"/>
    <property type="resolution" value="3.67 A"/>
    <property type="chains" value="A/B/K=1-340"/>
</dbReference>
<dbReference type="PDB" id="8K60">
    <property type="method" value="EM"/>
    <property type="resolution" value="3.40 A"/>
    <property type="chains" value="A/B/K=1-340"/>
</dbReference>
<dbReference type="PDBsum" id="8HVR"/>
<dbReference type="PDBsum" id="8JKE"/>
<dbReference type="PDBsum" id="8K60"/>
<dbReference type="EMDB" id="EMD-36914"/>
<dbReference type="SMR" id="P60312"/>
<dbReference type="FunCoup" id="P60312">
    <property type="interactions" value="152"/>
</dbReference>
<dbReference type="STRING" id="100226.gene:17762378"/>
<dbReference type="PaxDb" id="100226-SCO4729"/>
<dbReference type="KEGG" id="sco:SCO4729"/>
<dbReference type="PATRIC" id="fig|100226.15.peg.4800"/>
<dbReference type="eggNOG" id="COG0202">
    <property type="taxonomic scope" value="Bacteria"/>
</dbReference>
<dbReference type="HOGENOM" id="CLU_053084_0_1_11"/>
<dbReference type="InParanoid" id="P60312"/>
<dbReference type="OrthoDB" id="9805706at2"/>
<dbReference type="PhylomeDB" id="P60312"/>
<dbReference type="PRO" id="PR:P60312"/>
<dbReference type="Proteomes" id="UP000001973">
    <property type="component" value="Chromosome"/>
</dbReference>
<dbReference type="GO" id="GO:0005737">
    <property type="term" value="C:cytoplasm"/>
    <property type="evidence" value="ECO:0000318"/>
    <property type="project" value="GO_Central"/>
</dbReference>
<dbReference type="GO" id="GO:0000428">
    <property type="term" value="C:DNA-directed RNA polymerase complex"/>
    <property type="evidence" value="ECO:0007669"/>
    <property type="project" value="UniProtKB-KW"/>
</dbReference>
<dbReference type="GO" id="GO:0009295">
    <property type="term" value="C:nucleoid"/>
    <property type="evidence" value="ECO:0007669"/>
    <property type="project" value="UniProtKB-SubCell"/>
</dbReference>
<dbReference type="GO" id="GO:0003677">
    <property type="term" value="F:DNA binding"/>
    <property type="evidence" value="ECO:0007669"/>
    <property type="project" value="UniProtKB-UniRule"/>
</dbReference>
<dbReference type="GO" id="GO:0003899">
    <property type="term" value="F:DNA-directed RNA polymerase activity"/>
    <property type="evidence" value="ECO:0007669"/>
    <property type="project" value="UniProtKB-UniRule"/>
</dbReference>
<dbReference type="GO" id="GO:0046983">
    <property type="term" value="F:protein dimerization activity"/>
    <property type="evidence" value="ECO:0007669"/>
    <property type="project" value="InterPro"/>
</dbReference>
<dbReference type="GO" id="GO:0006351">
    <property type="term" value="P:DNA-templated transcription"/>
    <property type="evidence" value="ECO:0007669"/>
    <property type="project" value="UniProtKB-UniRule"/>
</dbReference>
<dbReference type="CDD" id="cd06928">
    <property type="entry name" value="RNAP_alpha_NTD"/>
    <property type="match status" value="1"/>
</dbReference>
<dbReference type="FunFam" id="1.10.150.20:FF:000001">
    <property type="entry name" value="DNA-directed RNA polymerase subunit alpha"/>
    <property type="match status" value="1"/>
</dbReference>
<dbReference type="FunFam" id="2.170.120.12:FF:000001">
    <property type="entry name" value="DNA-directed RNA polymerase subunit alpha"/>
    <property type="match status" value="1"/>
</dbReference>
<dbReference type="Gene3D" id="1.10.150.20">
    <property type="entry name" value="5' to 3' exonuclease, C-terminal subdomain"/>
    <property type="match status" value="1"/>
</dbReference>
<dbReference type="Gene3D" id="2.170.120.12">
    <property type="entry name" value="DNA-directed RNA polymerase, insert domain"/>
    <property type="match status" value="1"/>
</dbReference>
<dbReference type="Gene3D" id="3.30.1360.10">
    <property type="entry name" value="RNA polymerase, RBP11-like subunit"/>
    <property type="match status" value="1"/>
</dbReference>
<dbReference type="HAMAP" id="MF_00059">
    <property type="entry name" value="RNApol_bact_RpoA"/>
    <property type="match status" value="1"/>
</dbReference>
<dbReference type="InterPro" id="IPR011262">
    <property type="entry name" value="DNA-dir_RNA_pol_insert"/>
</dbReference>
<dbReference type="InterPro" id="IPR011263">
    <property type="entry name" value="DNA-dir_RNA_pol_RpoA/D/Rpb3"/>
</dbReference>
<dbReference type="InterPro" id="IPR011773">
    <property type="entry name" value="DNA-dir_RpoA"/>
</dbReference>
<dbReference type="InterPro" id="IPR036603">
    <property type="entry name" value="RBP11-like"/>
</dbReference>
<dbReference type="InterPro" id="IPR011260">
    <property type="entry name" value="RNAP_asu_C"/>
</dbReference>
<dbReference type="InterPro" id="IPR036643">
    <property type="entry name" value="RNApol_insert_sf"/>
</dbReference>
<dbReference type="NCBIfam" id="NF003513">
    <property type="entry name" value="PRK05182.1-2"/>
    <property type="match status" value="1"/>
</dbReference>
<dbReference type="NCBIfam" id="NF003514">
    <property type="entry name" value="PRK05182.1-4"/>
    <property type="match status" value="1"/>
</dbReference>
<dbReference type="NCBIfam" id="NF003519">
    <property type="entry name" value="PRK05182.2-5"/>
    <property type="match status" value="1"/>
</dbReference>
<dbReference type="NCBIfam" id="TIGR02027">
    <property type="entry name" value="rpoA"/>
    <property type="match status" value="1"/>
</dbReference>
<dbReference type="Pfam" id="PF01000">
    <property type="entry name" value="RNA_pol_A_bac"/>
    <property type="match status" value="1"/>
</dbReference>
<dbReference type="Pfam" id="PF03118">
    <property type="entry name" value="RNA_pol_A_CTD"/>
    <property type="match status" value="1"/>
</dbReference>
<dbReference type="Pfam" id="PF01193">
    <property type="entry name" value="RNA_pol_L"/>
    <property type="match status" value="1"/>
</dbReference>
<dbReference type="SMART" id="SM00662">
    <property type="entry name" value="RPOLD"/>
    <property type="match status" value="1"/>
</dbReference>
<dbReference type="SUPFAM" id="SSF47789">
    <property type="entry name" value="C-terminal domain of RNA polymerase alpha subunit"/>
    <property type="match status" value="1"/>
</dbReference>
<dbReference type="SUPFAM" id="SSF56553">
    <property type="entry name" value="Insert subdomain of RNA polymerase alpha subunit"/>
    <property type="match status" value="1"/>
</dbReference>
<dbReference type="SUPFAM" id="SSF55257">
    <property type="entry name" value="RBP11-like subunits of RNA polymerase"/>
    <property type="match status" value="1"/>
</dbReference>
<comment type="function">
    <text evidence="1">DNA-dependent RNA polymerase catalyzes the transcription of DNA into RNA using the four ribonucleoside triphosphates as substrates.</text>
</comment>
<comment type="catalytic activity">
    <reaction evidence="1">
        <text>RNA(n) + a ribonucleoside 5'-triphosphate = RNA(n+1) + diphosphate</text>
        <dbReference type="Rhea" id="RHEA:21248"/>
        <dbReference type="Rhea" id="RHEA-COMP:14527"/>
        <dbReference type="Rhea" id="RHEA-COMP:17342"/>
        <dbReference type="ChEBI" id="CHEBI:33019"/>
        <dbReference type="ChEBI" id="CHEBI:61557"/>
        <dbReference type="ChEBI" id="CHEBI:140395"/>
        <dbReference type="EC" id="2.7.7.6"/>
    </reaction>
</comment>
<comment type="subunit">
    <text evidence="1">Homodimer. The RNAP catalytic core consists of 2 alpha, 1 beta, 1 beta' and 1 omega subunit. When a sigma factor is associated with the core the holoenzyme is formed, which can initiate transcription.</text>
</comment>
<comment type="subcellular location">
    <subcellularLocation>
        <location evidence="3">Cytoplasm</location>
        <location evidence="3">Nucleoid</location>
    </subcellularLocation>
</comment>
<comment type="domain">
    <text evidence="1">The N-terminal domain is essential for RNAP assembly and basal transcription, whereas the C-terminal domain is involved in interaction with transcriptional regulators and with upstream promoter elements.</text>
</comment>
<comment type="similarity">
    <text evidence="1">Belongs to the RNA polymerase alpha chain family.</text>
</comment>
<feature type="chain" id="PRO_0000175389" description="DNA-directed RNA polymerase subunit alpha">
    <location>
        <begin position="1"/>
        <end position="340"/>
    </location>
</feature>
<feature type="region of interest" description="Alpha N-terminal domain (alpha-NTD)" evidence="1">
    <location>
        <begin position="1"/>
        <end position="226"/>
    </location>
</feature>
<feature type="region of interest" description="Alpha C-terminal domain (alpha-CTD)" evidence="1">
    <location>
        <begin position="243"/>
        <end position="340"/>
    </location>
</feature>
<feature type="sequence conflict" description="In Ref. 1; CAA63080." evidence="2" ref="1">
    <original>R</original>
    <variation>S</variation>
    <location>
        <position position="98"/>
    </location>
</feature>
<feature type="sequence conflict" description="In Ref. 1; CAA63080." evidence="2" ref="1">
    <original>Q</original>
    <variation>E</variation>
    <location>
        <position position="154"/>
    </location>
</feature>
<feature type="sequence conflict" description="In Ref. 1; CAA63080." evidence="2" ref="1">
    <location>
        <position position="206"/>
    </location>
</feature>
<feature type="strand" evidence="4">
    <location>
        <begin position="9"/>
        <end position="26"/>
    </location>
</feature>
<feature type="helix" evidence="4">
    <location>
        <begin position="31"/>
        <end position="43"/>
    </location>
</feature>
<feature type="strand" evidence="4">
    <location>
        <begin position="47"/>
        <end position="56"/>
    </location>
</feature>
<feature type="strand" evidence="4">
    <location>
        <begin position="69"/>
        <end position="71"/>
    </location>
</feature>
<feature type="helix" evidence="4">
    <location>
        <begin position="73"/>
        <end position="81"/>
    </location>
</feature>
<feature type="strand" evidence="4">
    <location>
        <begin position="85"/>
        <end position="87"/>
    </location>
</feature>
<feature type="strand" evidence="4">
    <location>
        <begin position="93"/>
        <end position="106"/>
    </location>
</feature>
<feature type="helix" evidence="4">
    <location>
        <begin position="107"/>
        <end position="109"/>
    </location>
</feature>
<feature type="strand" evidence="4">
    <location>
        <begin position="116"/>
        <end position="119"/>
    </location>
</feature>
<feature type="strand" evidence="4">
    <location>
        <begin position="124"/>
        <end position="128"/>
    </location>
</feature>
<feature type="strand" evidence="4">
    <location>
        <begin position="133"/>
        <end position="147"/>
    </location>
</feature>
<feature type="helix" evidence="4">
    <location>
        <begin position="149"/>
        <end position="151"/>
    </location>
</feature>
<feature type="strand" evidence="4">
    <location>
        <begin position="159"/>
        <end position="163"/>
    </location>
</feature>
<feature type="strand" evidence="4">
    <location>
        <begin position="171"/>
        <end position="178"/>
    </location>
</feature>
<feature type="strand" evidence="5">
    <location>
        <begin position="185"/>
        <end position="187"/>
    </location>
</feature>
<feature type="strand" evidence="4">
    <location>
        <begin position="190"/>
        <end position="198"/>
    </location>
</feature>
<feature type="helix" evidence="4">
    <location>
        <begin position="204"/>
        <end position="224"/>
    </location>
</feature>
<feature type="helix" evidence="4">
    <location>
        <begin position="240"/>
        <end position="248"/>
    </location>
</feature>
<feature type="helix" evidence="4">
    <location>
        <begin position="251"/>
        <end position="254"/>
    </location>
</feature>
<feature type="helix" evidence="4">
    <location>
        <begin position="258"/>
        <end position="266"/>
    </location>
</feature>
<feature type="helix" evidence="4">
    <location>
        <begin position="272"/>
        <end position="277"/>
    </location>
</feature>
<feature type="helix" evidence="4">
    <location>
        <begin position="280"/>
        <end position="284"/>
    </location>
</feature>
<feature type="helix" evidence="4">
    <location>
        <begin position="291"/>
        <end position="304"/>
    </location>
</feature>
<reference key="1">
    <citation type="journal article" date="1996" name="Nucleic Acids Res.">
        <title>Molecular analysis of RNA polymerase alpha subunit gene from Streptomyces coelicolor A3(2).</title>
        <authorList>
            <person name="Cho E.-J."/>
            <person name="Bae J.-B."/>
            <person name="Kang J.-G."/>
            <person name="Roe J.-H."/>
        </authorList>
    </citation>
    <scope>NUCLEOTIDE SEQUENCE [GENOMIC DNA]</scope>
    <source>
        <strain>ATCC BAA-471 / A3(2) / M145</strain>
    </source>
</reference>
<reference key="2">
    <citation type="journal article" date="2002" name="Nature">
        <title>Complete genome sequence of the model actinomycete Streptomyces coelicolor A3(2).</title>
        <authorList>
            <person name="Bentley S.D."/>
            <person name="Chater K.F."/>
            <person name="Cerdeno-Tarraga A.-M."/>
            <person name="Challis G.L."/>
            <person name="Thomson N.R."/>
            <person name="James K.D."/>
            <person name="Harris D.E."/>
            <person name="Quail M.A."/>
            <person name="Kieser H."/>
            <person name="Harper D."/>
            <person name="Bateman A."/>
            <person name="Brown S."/>
            <person name="Chandra G."/>
            <person name="Chen C.W."/>
            <person name="Collins M."/>
            <person name="Cronin A."/>
            <person name="Fraser A."/>
            <person name="Goble A."/>
            <person name="Hidalgo J."/>
            <person name="Hornsby T."/>
            <person name="Howarth S."/>
            <person name="Huang C.-H."/>
            <person name="Kieser T."/>
            <person name="Larke L."/>
            <person name="Murphy L.D."/>
            <person name="Oliver K."/>
            <person name="O'Neil S."/>
            <person name="Rabbinowitsch E."/>
            <person name="Rajandream M.A."/>
            <person name="Rutherford K.M."/>
            <person name="Rutter S."/>
            <person name="Seeger K."/>
            <person name="Saunders D."/>
            <person name="Sharp S."/>
            <person name="Squares R."/>
            <person name="Squares S."/>
            <person name="Taylor K."/>
            <person name="Warren T."/>
            <person name="Wietzorrek A."/>
            <person name="Woodward J.R."/>
            <person name="Barrell B.G."/>
            <person name="Parkhill J."/>
            <person name="Hopwood D.A."/>
        </authorList>
    </citation>
    <scope>NUCLEOTIDE SEQUENCE [LARGE SCALE GENOMIC DNA]</scope>
    <source>
        <strain>ATCC BAA-471 / A3(2) / M145</strain>
    </source>
</reference>
<reference key="3">
    <citation type="journal article" date="2013" name="J. Proteomics">
        <title>Proteomic survey of the Streptomyces coelicolor nucleoid.</title>
        <authorList>
            <person name="Bradshaw E."/>
            <person name="Saalbach G."/>
            <person name="McArthur M."/>
        </authorList>
    </citation>
    <scope>IDENTIFICATION BY MASS SPECTROMETRY</scope>
    <scope>SUBCELLULAR LOCATION</scope>
    <source>
        <strain>ATCC BAA-471 / A3(2) / M145</strain>
    </source>
</reference>
<protein>
    <recommendedName>
        <fullName evidence="1">DNA-directed RNA polymerase subunit alpha</fullName>
        <shortName evidence="1">RNAP subunit alpha</shortName>
        <ecNumber evidence="1">2.7.7.6</ecNumber>
    </recommendedName>
    <alternativeName>
        <fullName evidence="1">RNA polymerase subunit alpha</fullName>
    </alternativeName>
    <alternativeName>
        <fullName evidence="1">Transcriptase subunit alpha</fullName>
    </alternativeName>
</protein>
<proteinExistence type="evidence at protein level"/>